<organism>
    <name type="scientific">Mus musculus</name>
    <name type="common">Mouse</name>
    <dbReference type="NCBI Taxonomy" id="10090"/>
    <lineage>
        <taxon>Eukaryota</taxon>
        <taxon>Metazoa</taxon>
        <taxon>Chordata</taxon>
        <taxon>Craniata</taxon>
        <taxon>Vertebrata</taxon>
        <taxon>Euteleostomi</taxon>
        <taxon>Mammalia</taxon>
        <taxon>Eutheria</taxon>
        <taxon>Euarchontoglires</taxon>
        <taxon>Glires</taxon>
        <taxon>Rodentia</taxon>
        <taxon>Myomorpha</taxon>
        <taxon>Muroidea</taxon>
        <taxon>Muridae</taxon>
        <taxon>Murinae</taxon>
        <taxon>Mus</taxon>
        <taxon>Mus</taxon>
    </lineage>
</organism>
<feature type="chain" id="PRO_0000299407" description="Splicing factor, arginine/serine-rich 19">
    <location>
        <begin position="1"/>
        <end position="1256"/>
    </location>
</feature>
<feature type="region of interest" description="Disordered" evidence="3">
    <location>
        <begin position="1"/>
        <end position="33"/>
    </location>
</feature>
<feature type="region of interest" description="Disordered" evidence="3">
    <location>
        <begin position="158"/>
        <end position="343"/>
    </location>
</feature>
<feature type="region of interest" description="Disordered" evidence="3">
    <location>
        <begin position="371"/>
        <end position="395"/>
    </location>
</feature>
<feature type="region of interest" description="Disordered" evidence="3">
    <location>
        <begin position="408"/>
        <end position="1030"/>
    </location>
</feature>
<feature type="region of interest" description="Disordered" evidence="3">
    <location>
        <begin position="1112"/>
        <end position="1152"/>
    </location>
</feature>
<feature type="region of interest" description="Necessary for interaction with the CTD domain of POLR2A" evidence="1">
    <location>
        <begin position="1131"/>
        <end position="1256"/>
    </location>
</feature>
<feature type="region of interest" description="Disordered" evidence="3">
    <location>
        <begin position="1221"/>
        <end position="1256"/>
    </location>
</feature>
<feature type="compositionally biased region" description="Basic and acidic residues" evidence="3">
    <location>
        <begin position="7"/>
        <end position="27"/>
    </location>
</feature>
<feature type="compositionally biased region" description="Low complexity" evidence="3">
    <location>
        <begin position="192"/>
        <end position="206"/>
    </location>
</feature>
<feature type="compositionally biased region" description="Pro residues" evidence="3">
    <location>
        <begin position="207"/>
        <end position="222"/>
    </location>
</feature>
<feature type="compositionally biased region" description="Basic and acidic residues" evidence="3">
    <location>
        <begin position="227"/>
        <end position="236"/>
    </location>
</feature>
<feature type="compositionally biased region" description="Polar residues" evidence="3">
    <location>
        <begin position="255"/>
        <end position="265"/>
    </location>
</feature>
<feature type="compositionally biased region" description="Acidic residues" evidence="3">
    <location>
        <begin position="268"/>
        <end position="282"/>
    </location>
</feature>
<feature type="compositionally biased region" description="Acidic residues" evidence="3">
    <location>
        <begin position="382"/>
        <end position="393"/>
    </location>
</feature>
<feature type="compositionally biased region" description="Low complexity" evidence="3">
    <location>
        <begin position="412"/>
        <end position="424"/>
    </location>
</feature>
<feature type="compositionally biased region" description="Basic residues" evidence="3">
    <location>
        <begin position="478"/>
        <end position="489"/>
    </location>
</feature>
<feature type="compositionally biased region" description="Basic residues" evidence="3">
    <location>
        <begin position="538"/>
        <end position="553"/>
    </location>
</feature>
<feature type="compositionally biased region" description="Basic residues" evidence="3">
    <location>
        <begin position="560"/>
        <end position="577"/>
    </location>
</feature>
<feature type="compositionally biased region" description="Basic residues" evidence="3">
    <location>
        <begin position="592"/>
        <end position="611"/>
    </location>
</feature>
<feature type="compositionally biased region" description="Basic and acidic residues" evidence="3">
    <location>
        <begin position="612"/>
        <end position="623"/>
    </location>
</feature>
<feature type="compositionally biased region" description="Basic and acidic residues" evidence="3">
    <location>
        <begin position="696"/>
        <end position="709"/>
    </location>
</feature>
<feature type="compositionally biased region" description="Basic and acidic residues" evidence="3">
    <location>
        <begin position="719"/>
        <end position="741"/>
    </location>
</feature>
<feature type="compositionally biased region" description="Low complexity" evidence="3">
    <location>
        <begin position="752"/>
        <end position="775"/>
    </location>
</feature>
<feature type="compositionally biased region" description="Low complexity" evidence="3">
    <location>
        <begin position="793"/>
        <end position="804"/>
    </location>
</feature>
<feature type="compositionally biased region" description="Basic and acidic residues" evidence="3">
    <location>
        <begin position="813"/>
        <end position="831"/>
    </location>
</feature>
<feature type="compositionally biased region" description="Basic residues" evidence="3">
    <location>
        <begin position="843"/>
        <end position="875"/>
    </location>
</feature>
<feature type="compositionally biased region" description="Pro residues" evidence="3">
    <location>
        <begin position="922"/>
        <end position="935"/>
    </location>
</feature>
<feature type="compositionally biased region" description="Polar residues" evidence="3">
    <location>
        <begin position="938"/>
        <end position="947"/>
    </location>
</feature>
<feature type="compositionally biased region" description="Acidic residues" evidence="3">
    <location>
        <begin position="969"/>
        <end position="984"/>
    </location>
</feature>
<feature type="compositionally biased region" description="Low complexity" evidence="3">
    <location>
        <begin position="985"/>
        <end position="1017"/>
    </location>
</feature>
<feature type="compositionally biased region" description="Basic and acidic residues" evidence="3">
    <location>
        <begin position="1133"/>
        <end position="1152"/>
    </location>
</feature>
<feature type="compositionally biased region" description="Pro residues" evidence="3">
    <location>
        <begin position="1244"/>
        <end position="1256"/>
    </location>
</feature>
<feature type="modified residue" description="Phosphoserine" evidence="7">
    <location>
        <position position="240"/>
    </location>
</feature>
<feature type="modified residue" description="Phosphothreonine" evidence="2">
    <location>
        <position position="328"/>
    </location>
</feature>
<feature type="modified residue" description="Phosphoserine" evidence="2">
    <location>
        <position position="442"/>
    </location>
</feature>
<feature type="modified residue" description="Phosphoserine" evidence="2">
    <location>
        <position position="447"/>
    </location>
</feature>
<feature type="modified residue" description="Phosphoserine" evidence="2">
    <location>
        <position position="491"/>
    </location>
</feature>
<feature type="modified residue" description="Phosphoserine" evidence="2">
    <location>
        <position position="493"/>
    </location>
</feature>
<feature type="modified residue" description="Phosphoserine" evidence="7">
    <location>
        <position position="510"/>
    </location>
</feature>
<feature type="modified residue" description="Phosphoserine" evidence="7">
    <location>
        <position position="518"/>
    </location>
</feature>
<feature type="modified residue" description="Phosphoserine" evidence="2">
    <location>
        <position position="520"/>
    </location>
</feature>
<feature type="modified residue" description="Phosphoserine" evidence="7">
    <location>
        <position position="577"/>
    </location>
</feature>
<feature type="modified residue" description="Phosphoserine" evidence="7">
    <location>
        <position position="579"/>
    </location>
</feature>
<feature type="modified residue" description="Phosphothreonine" evidence="2">
    <location>
        <position position="663"/>
    </location>
</feature>
<feature type="modified residue" description="Phosphoserine" evidence="7">
    <location>
        <position position="676"/>
    </location>
</feature>
<feature type="modified residue" description="Phosphoserine" evidence="7">
    <location>
        <position position="682"/>
    </location>
</feature>
<feature type="modified residue" description="Phosphotyrosine" evidence="2">
    <location>
        <position position="689"/>
    </location>
</feature>
<feature type="modified residue" description="Phosphoserine" evidence="6 7">
    <location>
        <position position="691"/>
    </location>
</feature>
<feature type="modified residue" description="Phosphoserine" evidence="6 7">
    <location>
        <position position="695"/>
    </location>
</feature>
<feature type="modified residue" description="Phosphoserine" evidence="2">
    <location>
        <position position="819"/>
    </location>
</feature>
<feature type="modified residue" description="Phosphoserine" evidence="2">
    <location>
        <position position="821"/>
    </location>
</feature>
<feature type="modified residue" description="Phosphoserine" evidence="2">
    <location>
        <position position="876"/>
    </location>
</feature>
<feature type="modified residue" description="Phosphoserine" evidence="2">
    <location>
        <position position="883"/>
    </location>
</feature>
<feature type="modified residue" description="Phosphoserine" evidence="7">
    <location>
        <position position="910"/>
    </location>
</feature>
<feature type="modified residue" description="Phosphoserine" evidence="6 7">
    <location>
        <position position="912"/>
    </location>
</feature>
<feature type="modified residue" description="Phosphothreonine" evidence="2">
    <location>
        <position position="923"/>
    </location>
</feature>
<feature type="modified residue" description="Phosphothreonine" evidence="6 7">
    <location>
        <position position="936"/>
    </location>
</feature>
<feature type="modified residue" description="Phosphoserine" evidence="7">
    <location>
        <position position="939"/>
    </location>
</feature>
<feature type="modified residue" description="Phosphothreonine" evidence="2">
    <location>
        <position position="948"/>
    </location>
</feature>
<feature type="cross-link" description="Glycyl lysine isopeptide (Lys-Gly) (interchain with G-Cter in SUMO2)" evidence="2">
    <location>
        <position position="812"/>
    </location>
</feature>
<feature type="splice variant" id="VSP_027636" description="In isoform 2." evidence="4">
    <original>VSPQSH</original>
    <variation>GSCPVA</variation>
    <location>
        <begin position="161"/>
        <end position="166"/>
    </location>
</feature>
<feature type="splice variant" id="VSP_027637" description="In isoform 2." evidence="4">
    <location>
        <begin position="167"/>
        <end position="1256"/>
    </location>
</feature>
<dbReference type="EMBL" id="AK141920">
    <property type="protein sequence ID" value="BAE24887.1"/>
    <property type="molecule type" value="mRNA"/>
</dbReference>
<dbReference type="EMBL" id="BC042576">
    <property type="protein sequence ID" value="AAH42576.1"/>
    <property type="molecule type" value="mRNA"/>
</dbReference>
<dbReference type="EMBL" id="BC043138">
    <property type="protein sequence ID" value="AAH43138.1"/>
    <property type="molecule type" value="mRNA"/>
</dbReference>
<dbReference type="EMBL" id="BC085153">
    <property type="protein sequence ID" value="AAH85153.1"/>
    <property type="molecule type" value="mRNA"/>
</dbReference>
<dbReference type="CCDS" id="CCDS21225.1">
    <molecule id="Q5U4C3-1"/>
</dbReference>
<dbReference type="RefSeq" id="NP_001008422.1">
    <molecule id="Q5U4C3-1"/>
    <property type="nucleotide sequence ID" value="NM_001008422.2"/>
</dbReference>
<dbReference type="RefSeq" id="NP_001387748.1">
    <molecule id="Q5U4C3-1"/>
    <property type="nucleotide sequence ID" value="NM_001400819.1"/>
</dbReference>
<dbReference type="RefSeq" id="NP_001387749.1">
    <molecule id="Q5U4C3-1"/>
    <property type="nucleotide sequence ID" value="NM_001400820.1"/>
</dbReference>
<dbReference type="RefSeq" id="NP_001387750.1">
    <molecule id="Q5U4C3-1"/>
    <property type="nucleotide sequence ID" value="NM_001400821.1"/>
</dbReference>
<dbReference type="RefSeq" id="NP_001387751.1">
    <molecule id="Q5U4C3-2"/>
    <property type="nucleotide sequence ID" value="NM_001400822.1"/>
</dbReference>
<dbReference type="RefSeq" id="XP_006540884.1">
    <property type="nucleotide sequence ID" value="XM_006540821.3"/>
</dbReference>
<dbReference type="RefSeq" id="XP_011249157.1">
    <property type="nucleotide sequence ID" value="XM_011250855.2"/>
</dbReference>
<dbReference type="SMR" id="Q5U4C3"/>
<dbReference type="BioGRID" id="231387">
    <property type="interactions" value="2"/>
</dbReference>
<dbReference type="FunCoup" id="Q5U4C3">
    <property type="interactions" value="1331"/>
</dbReference>
<dbReference type="IntAct" id="Q5U4C3">
    <property type="interactions" value="2"/>
</dbReference>
<dbReference type="MINT" id="Q5U4C3"/>
<dbReference type="STRING" id="10090.ENSMUSP00000082501"/>
<dbReference type="GlyGen" id="Q5U4C3">
    <property type="glycosylation" value="2 sites"/>
</dbReference>
<dbReference type="iPTMnet" id="Q5U4C3"/>
<dbReference type="PhosphoSitePlus" id="Q5U4C3"/>
<dbReference type="jPOST" id="Q5U4C3"/>
<dbReference type="PaxDb" id="10090-ENSMUSP00000082501"/>
<dbReference type="PeptideAtlas" id="Q5U4C3"/>
<dbReference type="ProteomicsDB" id="255394">
    <molecule id="Q5U4C3-1"/>
</dbReference>
<dbReference type="ProteomicsDB" id="255395">
    <molecule id="Q5U4C3-2"/>
</dbReference>
<dbReference type="Pumba" id="Q5U4C3"/>
<dbReference type="Antibodypedia" id="32077">
    <property type="antibodies" value="79 antibodies from 18 providers"/>
</dbReference>
<dbReference type="DNASU" id="233208"/>
<dbReference type="Ensembl" id="ENSMUST00000085383.11">
    <molecule id="Q5U4C3-1"/>
    <property type="protein sequence ID" value="ENSMUSP00000082501.3"/>
    <property type="gene ID" value="ENSMUSG00000038406.18"/>
</dbReference>
<dbReference type="Ensembl" id="ENSMUST00000211735.2">
    <molecule id="Q5U4C3-1"/>
    <property type="protein sequence ID" value="ENSMUSP00000148251.2"/>
    <property type="gene ID" value="ENSMUSG00000038406.18"/>
</dbReference>
<dbReference type="GeneID" id="233208"/>
<dbReference type="KEGG" id="mmu:233208"/>
<dbReference type="UCSC" id="uc009gso.1">
    <molecule id="Q5U4C3-1"/>
    <property type="organism name" value="mouse"/>
</dbReference>
<dbReference type="UCSC" id="uc009gsq.1">
    <molecule id="Q5U4C3-2"/>
    <property type="organism name" value="mouse"/>
</dbReference>
<dbReference type="AGR" id="MGI:2141980"/>
<dbReference type="CTD" id="58506"/>
<dbReference type="MGI" id="MGI:2141980">
    <property type="gene designation" value="Scaf1"/>
</dbReference>
<dbReference type="VEuPathDB" id="HostDB:ENSMUSG00000038406"/>
<dbReference type="eggNOG" id="KOG0825">
    <property type="taxonomic scope" value="Eukaryota"/>
</dbReference>
<dbReference type="GeneTree" id="ENSGT00950000183205"/>
<dbReference type="HOGENOM" id="CLU_006936_0_0_1"/>
<dbReference type="InParanoid" id="Q5U4C3"/>
<dbReference type="OMA" id="ADTRWGG"/>
<dbReference type="OrthoDB" id="1935339at2759"/>
<dbReference type="PhylomeDB" id="Q5U4C3"/>
<dbReference type="TreeFam" id="TF332183"/>
<dbReference type="BioGRID-ORCS" id="233208">
    <property type="hits" value="5 hits in 78 CRISPR screens"/>
</dbReference>
<dbReference type="ChiTaRS" id="Scaf1">
    <property type="organism name" value="mouse"/>
</dbReference>
<dbReference type="PRO" id="PR:Q5U4C3"/>
<dbReference type="Proteomes" id="UP000000589">
    <property type="component" value="Chromosome 7"/>
</dbReference>
<dbReference type="RNAct" id="Q5U4C3">
    <property type="molecule type" value="protein"/>
</dbReference>
<dbReference type="Bgee" id="ENSMUSG00000038406">
    <property type="expression patterns" value="Expressed in embryonic brain and 211 other cell types or tissues"/>
</dbReference>
<dbReference type="ExpressionAtlas" id="Q5U4C3">
    <property type="expression patterns" value="baseline and differential"/>
</dbReference>
<dbReference type="GO" id="GO:0005634">
    <property type="term" value="C:nucleus"/>
    <property type="evidence" value="ECO:0007669"/>
    <property type="project" value="UniProtKB-SubCell"/>
</dbReference>
<dbReference type="GO" id="GO:0019904">
    <property type="term" value="F:protein domain specific binding"/>
    <property type="evidence" value="ECO:0007669"/>
    <property type="project" value="Ensembl"/>
</dbReference>
<dbReference type="GO" id="GO:0003723">
    <property type="term" value="F:RNA binding"/>
    <property type="evidence" value="ECO:0007669"/>
    <property type="project" value="UniProtKB-KW"/>
</dbReference>
<dbReference type="GO" id="GO:0099122">
    <property type="term" value="F:RNA polymerase II C-terminal domain binding"/>
    <property type="evidence" value="ECO:0007669"/>
    <property type="project" value="Ensembl"/>
</dbReference>
<dbReference type="GO" id="GO:0006397">
    <property type="term" value="P:mRNA processing"/>
    <property type="evidence" value="ECO:0007669"/>
    <property type="project" value="UniProtKB-KW"/>
</dbReference>
<dbReference type="GO" id="GO:0008380">
    <property type="term" value="P:RNA splicing"/>
    <property type="evidence" value="ECO:0007669"/>
    <property type="project" value="UniProtKB-KW"/>
</dbReference>
<dbReference type="GO" id="GO:0006366">
    <property type="term" value="P:transcription by RNA polymerase II"/>
    <property type="evidence" value="ECO:0007669"/>
    <property type="project" value="Ensembl"/>
</dbReference>
<dbReference type="InterPro" id="IPR042841">
    <property type="entry name" value="SCAF1"/>
</dbReference>
<dbReference type="InterPro" id="IPR057031">
    <property type="entry name" value="SCAF11-like_C"/>
</dbReference>
<dbReference type="PANTHER" id="PTHR47013">
    <property type="entry name" value="SPLICING FACTOR, ARGININE/SERINE-RICH 19"/>
    <property type="match status" value="1"/>
</dbReference>
<dbReference type="PANTHER" id="PTHR47013:SF1">
    <property type="entry name" value="SPLICING FACTOR, ARGININE_SERINE-RICH 19"/>
    <property type="match status" value="1"/>
</dbReference>
<dbReference type="Pfam" id="PF23030">
    <property type="entry name" value="SCAF11-like_C"/>
    <property type="match status" value="1"/>
</dbReference>
<gene>
    <name type="primary">Scaf1</name>
    <name type="synonym">Sfrs19</name>
</gene>
<comment type="function">
    <text evidence="1">May function in pre-mRNA splicing.</text>
</comment>
<comment type="subunit">
    <text evidence="1">Interacts with POLR2A.</text>
</comment>
<comment type="subcellular location">
    <subcellularLocation>
        <location evidence="1">Nucleus</location>
    </subcellularLocation>
</comment>
<comment type="alternative products">
    <event type="alternative splicing"/>
    <isoform>
        <id>Q5U4C3-1</id>
        <name>1</name>
        <sequence type="displayed"/>
    </isoform>
    <isoform>
        <id>Q5U4C3-2</id>
        <name>2</name>
        <sequence type="described" ref="VSP_027636 VSP_027637"/>
    </isoform>
</comment>
<comment type="similarity">
    <text evidence="5">Belongs to the splicing factor SR family.</text>
</comment>
<keyword id="KW-0025">Alternative splicing</keyword>
<keyword id="KW-1017">Isopeptide bond</keyword>
<keyword id="KW-0507">mRNA processing</keyword>
<keyword id="KW-0508">mRNA splicing</keyword>
<keyword id="KW-0539">Nucleus</keyword>
<keyword id="KW-0597">Phosphoprotein</keyword>
<keyword id="KW-1185">Reference proteome</keyword>
<keyword id="KW-0677">Repeat</keyword>
<keyword id="KW-0694">RNA-binding</keyword>
<keyword id="KW-0832">Ubl conjugation</keyword>
<accession>Q5U4C3</accession>
<accession>Q3UR01</accession>
<protein>
    <recommendedName>
        <fullName>Splicing factor, arginine/serine-rich 19</fullName>
    </recommendedName>
    <alternativeName>
        <fullName>SR-related and CTD-associated factor 1</fullName>
    </alternativeName>
</protein>
<reference key="1">
    <citation type="journal article" date="2005" name="Science">
        <title>The transcriptional landscape of the mammalian genome.</title>
        <authorList>
            <person name="Carninci P."/>
            <person name="Kasukawa T."/>
            <person name="Katayama S."/>
            <person name="Gough J."/>
            <person name="Frith M.C."/>
            <person name="Maeda N."/>
            <person name="Oyama R."/>
            <person name="Ravasi T."/>
            <person name="Lenhard B."/>
            <person name="Wells C."/>
            <person name="Kodzius R."/>
            <person name="Shimokawa K."/>
            <person name="Bajic V.B."/>
            <person name="Brenner S.E."/>
            <person name="Batalov S."/>
            <person name="Forrest A.R."/>
            <person name="Zavolan M."/>
            <person name="Davis M.J."/>
            <person name="Wilming L.G."/>
            <person name="Aidinis V."/>
            <person name="Allen J.E."/>
            <person name="Ambesi-Impiombato A."/>
            <person name="Apweiler R."/>
            <person name="Aturaliya R.N."/>
            <person name="Bailey T.L."/>
            <person name="Bansal M."/>
            <person name="Baxter L."/>
            <person name="Beisel K.W."/>
            <person name="Bersano T."/>
            <person name="Bono H."/>
            <person name="Chalk A.M."/>
            <person name="Chiu K.P."/>
            <person name="Choudhary V."/>
            <person name="Christoffels A."/>
            <person name="Clutterbuck D.R."/>
            <person name="Crowe M.L."/>
            <person name="Dalla E."/>
            <person name="Dalrymple B.P."/>
            <person name="de Bono B."/>
            <person name="Della Gatta G."/>
            <person name="di Bernardo D."/>
            <person name="Down T."/>
            <person name="Engstrom P."/>
            <person name="Fagiolini M."/>
            <person name="Faulkner G."/>
            <person name="Fletcher C.F."/>
            <person name="Fukushima T."/>
            <person name="Furuno M."/>
            <person name="Futaki S."/>
            <person name="Gariboldi M."/>
            <person name="Georgii-Hemming P."/>
            <person name="Gingeras T.R."/>
            <person name="Gojobori T."/>
            <person name="Green R.E."/>
            <person name="Gustincich S."/>
            <person name="Harbers M."/>
            <person name="Hayashi Y."/>
            <person name="Hensch T.K."/>
            <person name="Hirokawa N."/>
            <person name="Hill D."/>
            <person name="Huminiecki L."/>
            <person name="Iacono M."/>
            <person name="Ikeo K."/>
            <person name="Iwama A."/>
            <person name="Ishikawa T."/>
            <person name="Jakt M."/>
            <person name="Kanapin A."/>
            <person name="Katoh M."/>
            <person name="Kawasawa Y."/>
            <person name="Kelso J."/>
            <person name="Kitamura H."/>
            <person name="Kitano H."/>
            <person name="Kollias G."/>
            <person name="Krishnan S.P."/>
            <person name="Kruger A."/>
            <person name="Kummerfeld S.K."/>
            <person name="Kurochkin I.V."/>
            <person name="Lareau L.F."/>
            <person name="Lazarevic D."/>
            <person name="Lipovich L."/>
            <person name="Liu J."/>
            <person name="Liuni S."/>
            <person name="McWilliam S."/>
            <person name="Madan Babu M."/>
            <person name="Madera M."/>
            <person name="Marchionni L."/>
            <person name="Matsuda H."/>
            <person name="Matsuzawa S."/>
            <person name="Miki H."/>
            <person name="Mignone F."/>
            <person name="Miyake S."/>
            <person name="Morris K."/>
            <person name="Mottagui-Tabar S."/>
            <person name="Mulder N."/>
            <person name="Nakano N."/>
            <person name="Nakauchi H."/>
            <person name="Ng P."/>
            <person name="Nilsson R."/>
            <person name="Nishiguchi S."/>
            <person name="Nishikawa S."/>
            <person name="Nori F."/>
            <person name="Ohara O."/>
            <person name="Okazaki Y."/>
            <person name="Orlando V."/>
            <person name="Pang K.C."/>
            <person name="Pavan W.J."/>
            <person name="Pavesi G."/>
            <person name="Pesole G."/>
            <person name="Petrovsky N."/>
            <person name="Piazza S."/>
            <person name="Reed J."/>
            <person name="Reid J.F."/>
            <person name="Ring B.Z."/>
            <person name="Ringwald M."/>
            <person name="Rost B."/>
            <person name="Ruan Y."/>
            <person name="Salzberg S.L."/>
            <person name="Sandelin A."/>
            <person name="Schneider C."/>
            <person name="Schoenbach C."/>
            <person name="Sekiguchi K."/>
            <person name="Semple C.A."/>
            <person name="Seno S."/>
            <person name="Sessa L."/>
            <person name="Sheng Y."/>
            <person name="Shibata Y."/>
            <person name="Shimada H."/>
            <person name="Shimada K."/>
            <person name="Silva D."/>
            <person name="Sinclair B."/>
            <person name="Sperling S."/>
            <person name="Stupka E."/>
            <person name="Sugiura K."/>
            <person name="Sultana R."/>
            <person name="Takenaka Y."/>
            <person name="Taki K."/>
            <person name="Tammoja K."/>
            <person name="Tan S.L."/>
            <person name="Tang S."/>
            <person name="Taylor M.S."/>
            <person name="Tegner J."/>
            <person name="Teichmann S.A."/>
            <person name="Ueda H.R."/>
            <person name="van Nimwegen E."/>
            <person name="Verardo R."/>
            <person name="Wei C.L."/>
            <person name="Yagi K."/>
            <person name="Yamanishi H."/>
            <person name="Zabarovsky E."/>
            <person name="Zhu S."/>
            <person name="Zimmer A."/>
            <person name="Hide W."/>
            <person name="Bult C."/>
            <person name="Grimmond S.M."/>
            <person name="Teasdale R.D."/>
            <person name="Liu E.T."/>
            <person name="Brusic V."/>
            <person name="Quackenbush J."/>
            <person name="Wahlestedt C."/>
            <person name="Mattick J.S."/>
            <person name="Hume D.A."/>
            <person name="Kai C."/>
            <person name="Sasaki D."/>
            <person name="Tomaru Y."/>
            <person name="Fukuda S."/>
            <person name="Kanamori-Katayama M."/>
            <person name="Suzuki M."/>
            <person name="Aoki J."/>
            <person name="Arakawa T."/>
            <person name="Iida J."/>
            <person name="Imamura K."/>
            <person name="Itoh M."/>
            <person name="Kato T."/>
            <person name="Kawaji H."/>
            <person name="Kawagashira N."/>
            <person name="Kawashima T."/>
            <person name="Kojima M."/>
            <person name="Kondo S."/>
            <person name="Konno H."/>
            <person name="Nakano K."/>
            <person name="Ninomiya N."/>
            <person name="Nishio T."/>
            <person name="Okada M."/>
            <person name="Plessy C."/>
            <person name="Shibata K."/>
            <person name="Shiraki T."/>
            <person name="Suzuki S."/>
            <person name="Tagami M."/>
            <person name="Waki K."/>
            <person name="Watahiki A."/>
            <person name="Okamura-Oho Y."/>
            <person name="Suzuki H."/>
            <person name="Kawai J."/>
            <person name="Hayashizaki Y."/>
        </authorList>
    </citation>
    <scope>NUCLEOTIDE SEQUENCE [LARGE SCALE MRNA] (ISOFORM 2)</scope>
    <source>
        <strain>C57BL/6J</strain>
        <tissue>Spinal ganglion</tissue>
    </source>
</reference>
<reference key="2">
    <citation type="journal article" date="2004" name="Genome Res.">
        <title>The status, quality, and expansion of the NIH full-length cDNA project: the Mammalian Gene Collection (MGC).</title>
        <authorList>
            <consortium name="The MGC Project Team"/>
        </authorList>
    </citation>
    <scope>NUCLEOTIDE SEQUENCE [LARGE SCALE MRNA] (ISOFORM 1)</scope>
    <source>
        <strain>C57BL/6J</strain>
        <strain>FVB/N</strain>
        <tissue>Brain</tissue>
        <tissue>Embryonic brain</tissue>
        <tissue>Liver</tissue>
    </source>
</reference>
<reference key="3">
    <citation type="journal article" date="2007" name="Proc. Natl. Acad. Sci. U.S.A.">
        <title>Large-scale phosphorylation analysis of mouse liver.</title>
        <authorList>
            <person name="Villen J."/>
            <person name="Beausoleil S.A."/>
            <person name="Gerber S.A."/>
            <person name="Gygi S.P."/>
        </authorList>
    </citation>
    <scope>PHOSPHORYLATION [LARGE SCALE ANALYSIS] AT SER-691; SER-695; SER-912 AND THR-936</scope>
    <scope>IDENTIFICATION BY MASS SPECTROMETRY [LARGE SCALE ANALYSIS]</scope>
    <source>
        <tissue>Liver</tissue>
    </source>
</reference>
<reference key="4">
    <citation type="journal article" date="2008" name="J. Proteome Res.">
        <title>Specific phosphopeptide enrichment with immobilized titanium ion affinity chromatography adsorbent for phosphoproteome analysis.</title>
        <authorList>
            <person name="Zhou H."/>
            <person name="Ye M."/>
            <person name="Dong J."/>
            <person name="Han G."/>
            <person name="Jiang X."/>
            <person name="Wu R."/>
            <person name="Zou H."/>
        </authorList>
    </citation>
    <scope>IDENTIFICATION BY MASS SPECTROMETRY [LARGE SCALE ANALYSIS]</scope>
    <source>
        <tissue>Liver</tissue>
    </source>
</reference>
<reference key="5">
    <citation type="journal article" date="2009" name="Immunity">
        <title>The phagosomal proteome in interferon-gamma-activated macrophages.</title>
        <authorList>
            <person name="Trost M."/>
            <person name="English L."/>
            <person name="Lemieux S."/>
            <person name="Courcelles M."/>
            <person name="Desjardins M."/>
            <person name="Thibault P."/>
        </authorList>
    </citation>
    <scope>IDENTIFICATION BY MASS SPECTROMETRY [LARGE SCALE ANALYSIS]</scope>
</reference>
<reference key="6">
    <citation type="journal article" date="2010" name="Cell">
        <title>A tissue-specific atlas of mouse protein phosphorylation and expression.</title>
        <authorList>
            <person name="Huttlin E.L."/>
            <person name="Jedrychowski M.P."/>
            <person name="Elias J.E."/>
            <person name="Goswami T."/>
            <person name="Rad R."/>
            <person name="Beausoleil S.A."/>
            <person name="Villen J."/>
            <person name="Haas W."/>
            <person name="Sowa M.E."/>
            <person name="Gygi S.P."/>
        </authorList>
    </citation>
    <scope>PHOSPHORYLATION [LARGE SCALE ANALYSIS] AT SER-240; SER-510; SER-518; SER-577; SER-579; SER-676; SER-682; SER-691; SER-695; SER-910; SER-912; THR-936 AND SER-939</scope>
    <scope>IDENTIFICATION BY MASS SPECTROMETRY [LARGE SCALE ANALYSIS]</scope>
    <source>
        <tissue>Brain</tissue>
        <tissue>Brown adipose tissue</tissue>
        <tissue>Heart</tissue>
        <tissue>Kidney</tissue>
        <tissue>Liver</tissue>
        <tissue>Lung</tissue>
        <tissue>Pancreas</tissue>
        <tissue>Spleen</tissue>
        <tissue>Testis</tissue>
    </source>
</reference>
<name>SFR19_MOUSE</name>
<sequence>MEEEDESRGKTEESGEDRGDGPPDRDPALSPSAFILRAIQQAVGSSLQGDLPNDKDGARCRGLRWRRCCRSPRSEPRSQESGAADTATVLDTAADSFLVELVSILDPPDTWVPSRLDLQPGESEDMLELVAEVRIGDRDPMPLPVPSLFPRLRAWRTGKTVSPQSHASRPACSRHLTLGTGDGGPAPPPAPSSASSSPSPSPSSSSPSPPPPPPPPPPPALPAPRFDIYDPFHPTDEAYSPPPAPEQKYDPFEPTGSNPSSSAGTPSPEEEEEEEEEEEEEGLSQSISRISETLAGIYDDNSLSQDFPGDDSPRREPPPPQTLGAPGTPPQADSTRAEGAPRRRVFVLGPEAEACHEGKVSVEVVTAGAPALSLPPLPPTDPEIEEGEIVQPEEEPRVAVSLFRAARPRQPPASVATLASVAAPAAPPASAPRAPEGDDFLSLHADSDGEGALQVDLGEPPAPPAADARWGGLDLRRKILTQRRERYRQRSASPGPPPARKKARRERQRSGDPAPPDSPSWEAKKHRSRERKLGSHSTARRRSRSRSRRRSRSRSADRRRGGHRSRSREKRRRRRRSASPPPAASSSSSSRRERHRGKRREGGKKKKKRSRSRAEKRSGDLEKLPASVPPSGSDRDSRRRGAVPPSIQDLTDHDLFAIKRTITVGRPDKAEPRAPSPAPAVSPKREVLYDSEGLSADERGGKSDKDRRRSGAASSSSSSREKGSRRKALDGDRGRDRDRSSKKTRPPKDSTPGSGPLPKAPPSSGSSSSSSSCSSRKVKLQSKVAVLIREGVSSTTPAKDSSSSGLGSIGVKFSRDRESRSPFLKPDERAPAEVAKVAPGSNKPKKTKAKAKAGAKKAKGTKGKTKPSKTRKKVRSGGSSTASGGPGSLKKSKADSCSQAASAKGTEETSWSGEERTTKAPSTPPPKVAPPPPALTPDSQTVDSSCKTPEVSFLPEEASEDTGVRVGAEEEEEEEEEEEEEEEQQPATTTATSTAAAAPSTAPSAGSTAGDSGAEDGPAARISQLPTLPPPMPWNLPAGVDCTTSGVLALTALLFKMEEANLASRAKAQELIQATNQILSHRKPSSTLGVTPAPVPTSLGLPPGPSSYLLPGSLPIGGCGSTPPTPTGLAPASDKREGSSSSEGRGDTDKYLKKLHTQERAVEEVKLAIKPYYQKKDITKEEYKDILRKAVHKICHSKSGEINPVKVSNLVRAYVQRYRYFRKHGRKPGDPPGPPRPPKEPGPPDKGGPGLPLPPL</sequence>
<evidence type="ECO:0000250" key="1"/>
<evidence type="ECO:0000250" key="2">
    <source>
        <dbReference type="UniProtKB" id="Q9H7N4"/>
    </source>
</evidence>
<evidence type="ECO:0000256" key="3">
    <source>
        <dbReference type="SAM" id="MobiDB-lite"/>
    </source>
</evidence>
<evidence type="ECO:0000303" key="4">
    <source>
    </source>
</evidence>
<evidence type="ECO:0000305" key="5"/>
<evidence type="ECO:0007744" key="6">
    <source>
    </source>
</evidence>
<evidence type="ECO:0007744" key="7">
    <source>
    </source>
</evidence>
<proteinExistence type="evidence at protein level"/>